<proteinExistence type="inferred from homology"/>
<name>RL24_SALTO</name>
<comment type="function">
    <text evidence="1">One of two assembly initiator proteins, it binds directly to the 5'-end of the 23S rRNA, where it nucleates assembly of the 50S subunit.</text>
</comment>
<comment type="function">
    <text evidence="1">One of the proteins that surrounds the polypeptide exit tunnel on the outside of the subunit.</text>
</comment>
<comment type="subunit">
    <text evidence="1">Part of the 50S ribosomal subunit.</text>
</comment>
<comment type="similarity">
    <text evidence="1">Belongs to the universal ribosomal protein uL24 family.</text>
</comment>
<keyword id="KW-1185">Reference proteome</keyword>
<keyword id="KW-0687">Ribonucleoprotein</keyword>
<keyword id="KW-0689">Ribosomal protein</keyword>
<keyword id="KW-0694">RNA-binding</keyword>
<keyword id="KW-0699">rRNA-binding</keyword>
<feature type="chain" id="PRO_0000355718" description="Large ribosomal subunit protein uL24">
    <location>
        <begin position="1"/>
        <end position="108"/>
    </location>
</feature>
<organism>
    <name type="scientific">Salinispora tropica (strain ATCC BAA-916 / DSM 44818 / JCM 13857 / NBRC 105044 / CNB-440)</name>
    <dbReference type="NCBI Taxonomy" id="369723"/>
    <lineage>
        <taxon>Bacteria</taxon>
        <taxon>Bacillati</taxon>
        <taxon>Actinomycetota</taxon>
        <taxon>Actinomycetes</taxon>
        <taxon>Micromonosporales</taxon>
        <taxon>Micromonosporaceae</taxon>
        <taxon>Salinispora</taxon>
    </lineage>
</organism>
<dbReference type="EMBL" id="CP000667">
    <property type="protein sequence ID" value="ABP56342.1"/>
    <property type="molecule type" value="Genomic_DNA"/>
</dbReference>
<dbReference type="SMR" id="A4XBN5"/>
<dbReference type="STRING" id="369723.Strop_3912"/>
<dbReference type="KEGG" id="stp:Strop_3912"/>
<dbReference type="eggNOG" id="COG0198">
    <property type="taxonomic scope" value="Bacteria"/>
</dbReference>
<dbReference type="HOGENOM" id="CLU_093315_2_0_11"/>
<dbReference type="Proteomes" id="UP000000235">
    <property type="component" value="Chromosome"/>
</dbReference>
<dbReference type="GO" id="GO:1990904">
    <property type="term" value="C:ribonucleoprotein complex"/>
    <property type="evidence" value="ECO:0007669"/>
    <property type="project" value="UniProtKB-KW"/>
</dbReference>
<dbReference type="GO" id="GO:0005840">
    <property type="term" value="C:ribosome"/>
    <property type="evidence" value="ECO:0007669"/>
    <property type="project" value="UniProtKB-KW"/>
</dbReference>
<dbReference type="GO" id="GO:0019843">
    <property type="term" value="F:rRNA binding"/>
    <property type="evidence" value="ECO:0007669"/>
    <property type="project" value="UniProtKB-UniRule"/>
</dbReference>
<dbReference type="GO" id="GO:0003735">
    <property type="term" value="F:structural constituent of ribosome"/>
    <property type="evidence" value="ECO:0007669"/>
    <property type="project" value="InterPro"/>
</dbReference>
<dbReference type="GO" id="GO:0006412">
    <property type="term" value="P:translation"/>
    <property type="evidence" value="ECO:0007669"/>
    <property type="project" value="UniProtKB-UniRule"/>
</dbReference>
<dbReference type="CDD" id="cd06089">
    <property type="entry name" value="KOW_RPL26"/>
    <property type="match status" value="1"/>
</dbReference>
<dbReference type="FunFam" id="2.30.30.30:FF:000004">
    <property type="entry name" value="50S ribosomal protein L24"/>
    <property type="match status" value="1"/>
</dbReference>
<dbReference type="Gene3D" id="2.30.30.30">
    <property type="match status" value="1"/>
</dbReference>
<dbReference type="HAMAP" id="MF_01326_B">
    <property type="entry name" value="Ribosomal_uL24_B"/>
    <property type="match status" value="1"/>
</dbReference>
<dbReference type="InterPro" id="IPR005824">
    <property type="entry name" value="KOW"/>
</dbReference>
<dbReference type="InterPro" id="IPR014722">
    <property type="entry name" value="Rib_uL2_dom2"/>
</dbReference>
<dbReference type="InterPro" id="IPR003256">
    <property type="entry name" value="Ribosomal_uL24"/>
</dbReference>
<dbReference type="InterPro" id="IPR005825">
    <property type="entry name" value="Ribosomal_uL24_CS"/>
</dbReference>
<dbReference type="InterPro" id="IPR041988">
    <property type="entry name" value="Ribosomal_uL24_KOW"/>
</dbReference>
<dbReference type="InterPro" id="IPR008991">
    <property type="entry name" value="Translation_prot_SH3-like_sf"/>
</dbReference>
<dbReference type="NCBIfam" id="TIGR01079">
    <property type="entry name" value="rplX_bact"/>
    <property type="match status" value="1"/>
</dbReference>
<dbReference type="PANTHER" id="PTHR12903">
    <property type="entry name" value="MITOCHONDRIAL RIBOSOMAL PROTEIN L24"/>
    <property type="match status" value="1"/>
</dbReference>
<dbReference type="Pfam" id="PF00467">
    <property type="entry name" value="KOW"/>
    <property type="match status" value="1"/>
</dbReference>
<dbReference type="Pfam" id="PF17136">
    <property type="entry name" value="ribosomal_L24"/>
    <property type="match status" value="1"/>
</dbReference>
<dbReference type="SMART" id="SM00739">
    <property type="entry name" value="KOW"/>
    <property type="match status" value="1"/>
</dbReference>
<dbReference type="SUPFAM" id="SSF50104">
    <property type="entry name" value="Translation proteins SH3-like domain"/>
    <property type="match status" value="1"/>
</dbReference>
<dbReference type="PROSITE" id="PS01108">
    <property type="entry name" value="RIBOSOMAL_L24"/>
    <property type="match status" value="1"/>
</dbReference>
<reference key="1">
    <citation type="journal article" date="2007" name="Proc. Natl. Acad. Sci. U.S.A.">
        <title>Genome sequencing reveals complex secondary metabolome in the marine actinomycete Salinispora tropica.</title>
        <authorList>
            <person name="Udwary D.W."/>
            <person name="Zeigler L."/>
            <person name="Asolkar R.N."/>
            <person name="Singan V."/>
            <person name="Lapidus A."/>
            <person name="Fenical W."/>
            <person name="Jensen P.R."/>
            <person name="Moore B.S."/>
        </authorList>
    </citation>
    <scope>NUCLEOTIDE SEQUENCE [LARGE SCALE GENOMIC DNA]</scope>
    <source>
        <strain>ATCC BAA-916 / DSM 44818 / JCM 13857 / NBRC 105044 / CNB-440</strain>
    </source>
</reference>
<sequence>MTVKVRKGDTVLVIAGKDKGAKGKVIAAYPRQDKVLVEGVNRVKKHTRISTTQRGAKTGGIVTQEAPIHVSNVMVLDSDGKPTRVGYRIDDNGQKVRIARSTGKDLSS</sequence>
<gene>
    <name evidence="1" type="primary">rplX</name>
    <name type="ordered locus">Strop_3912</name>
</gene>
<accession>A4XBN5</accession>
<evidence type="ECO:0000255" key="1">
    <source>
        <dbReference type="HAMAP-Rule" id="MF_01326"/>
    </source>
</evidence>
<evidence type="ECO:0000305" key="2"/>
<protein>
    <recommendedName>
        <fullName evidence="1">Large ribosomal subunit protein uL24</fullName>
    </recommendedName>
    <alternativeName>
        <fullName evidence="2">50S ribosomal protein L24</fullName>
    </alternativeName>
</protein>